<reference key="1">
    <citation type="journal article" date="2006" name="J. Virol.">
        <title>Psittacid herpesvirus 1 and infectious laryngotracheitis virus: Comparative genome sequence analysis of two avian alphaherpesviruses.</title>
        <authorList>
            <person name="Thureen D.R."/>
            <person name="Keeler C.L. Jr."/>
        </authorList>
    </citation>
    <scope>NUCLEOTIDE SEQUENCE [LARGE SCALE GENOMIC DNA]</scope>
</reference>
<keyword id="KW-1015">Disulfide bond</keyword>
<keyword id="KW-1169">Fusion of virus membrane with host cell membrane</keyword>
<keyword id="KW-1168">Fusion of virus membrane with host membrane</keyword>
<keyword id="KW-0325">Glycoprotein</keyword>
<keyword id="KW-1032">Host cell membrane</keyword>
<keyword id="KW-1040">Host Golgi apparatus</keyword>
<keyword id="KW-1043">Host membrane</keyword>
<keyword id="KW-0472">Membrane</keyword>
<keyword id="KW-1185">Reference proteome</keyword>
<keyword id="KW-0732">Signal</keyword>
<keyword id="KW-0261">Viral envelope protein</keyword>
<keyword id="KW-1162">Viral penetration into host cytoplasm</keyword>
<keyword id="KW-0946">Virion</keyword>
<keyword id="KW-1160">Virus entry into host cell</keyword>
<protein>
    <recommendedName>
        <fullName evidence="1">Envelope glycoprotein L</fullName>
        <shortName evidence="1">gL</shortName>
    </recommendedName>
</protein>
<accession>Q6UDG5</accession>
<comment type="function">
    <text evidence="1">The heterodimer glycoprotein H-glycoprotein L is required for the fusion of viral and plasma membranes leading to virus entry into the host cell. Acts as a functional inhibitor of gH and maintains gH in an inhibited form. Upon binding to host integrins, gL dissociates from gH leading to activation of the viral fusion glycoproteins gB and gH.</text>
</comment>
<comment type="subunit">
    <text evidence="1">Interacts with glycoprotein H (gH); this interaction is necessary for the correct processing and cell surface expression of gH. The heterodimer gH/gL seems to interact with gB trimers during fusion.</text>
</comment>
<comment type="subcellular location">
    <subcellularLocation>
        <location evidence="1">Virion membrane</location>
        <topology evidence="1">Peripheral membrane protein</topology>
        <orientation evidence="1">Extracellular side</orientation>
    </subcellularLocation>
    <subcellularLocation>
        <location evidence="1">Host cell membrane</location>
        <topology evidence="1">Peripheral membrane protein</topology>
        <orientation evidence="1">Extracellular side</orientation>
    </subcellularLocation>
    <subcellularLocation>
        <location evidence="1">Host Golgi apparatus</location>
        <location evidence="1">Host trans-Golgi network</location>
    </subcellularLocation>
    <text evidence="1">gL associates with the extravirion surface through its binding to gH. During virion morphogenesis, this protein probably accumulates in the host trans-Golgi where secondary envelopment occurs.</text>
</comment>
<comment type="PTM">
    <text>O-glycosylated, and sialylated.</text>
</comment>
<comment type="similarity">
    <text evidence="2">Belongs to the herpesviridae glycoprotein L (gL) family. Alphaherpesvirinae gL subfamily.</text>
</comment>
<organismHost>
    <name type="scientific">Amazona oratrix</name>
    <name type="common">yellow-headed parrot</name>
    <dbReference type="NCBI Taxonomy" id="152276"/>
</organismHost>
<sequence>MRRSAARGRAVSSTQTAMGAGAAIAVWAAALIALYSSCAAQTAPKTSSLRAANASDTIGRLIDGAEQLVSMRCMTSFEHEAAVTLYGPEYTPGGSMFEDLLTIIFKPQCSPPEAILWYKSGTAVRVNPYYLCRILVLALQGNPRGEVKFVVSRLIAEHAGGPLVRWPTTNVLRPEKTAPGGV</sequence>
<gene>
    <name evidence="1" type="primary">gL</name>
    <name type="ORF">UL1</name>
</gene>
<feature type="signal peptide" evidence="1">
    <location>
        <begin position="1"/>
        <end position="39"/>
    </location>
</feature>
<feature type="chain" id="PRO_0000406815" description="Envelope glycoprotein L" evidence="1">
    <location>
        <begin position="40"/>
        <end position="182"/>
    </location>
</feature>
<feature type="domain" description="gL alphaherpesvirus-type" evidence="2">
    <location>
        <begin position="52"/>
        <end position="182"/>
    </location>
</feature>
<feature type="disulfide bond" evidence="2">
    <location>
        <begin position="73"/>
        <end position="109"/>
    </location>
</feature>
<name>GL_PSHV1</name>
<evidence type="ECO:0000255" key="1">
    <source>
        <dbReference type="HAMAP-Rule" id="MF_04034"/>
    </source>
</evidence>
<evidence type="ECO:0000255" key="2">
    <source>
        <dbReference type="PROSITE-ProRule" id="PRU01368"/>
    </source>
</evidence>
<organism>
    <name type="scientific">Psittacid herpesvirus 1 (isolate Amazon parrot/-/97-0001/1997)</name>
    <name type="common">PsHV-1</name>
    <name type="synonym">Pacheco's disease virus</name>
    <dbReference type="NCBI Taxonomy" id="670426"/>
    <lineage>
        <taxon>Viruses</taxon>
        <taxon>Duplodnaviria</taxon>
        <taxon>Heunggongvirae</taxon>
        <taxon>Peploviricota</taxon>
        <taxon>Herviviricetes</taxon>
        <taxon>Herpesvirales</taxon>
        <taxon>Orthoherpesviridae</taxon>
        <taxon>Alphaherpesvirinae</taxon>
        <taxon>Iltovirus</taxon>
        <taxon>Iltovirus psittacidalpha1</taxon>
        <taxon>Psittacid alphaherpesvirus 1</taxon>
    </lineage>
</organism>
<proteinExistence type="inferred from homology"/>
<dbReference type="EMBL" id="AY372243">
    <property type="protein sequence ID" value="AAQ73745.1"/>
    <property type="molecule type" value="Genomic_DNA"/>
</dbReference>
<dbReference type="Proteomes" id="UP000006840">
    <property type="component" value="Segment"/>
</dbReference>
<dbReference type="GO" id="GO:0044177">
    <property type="term" value="C:host cell Golgi apparatus"/>
    <property type="evidence" value="ECO:0007669"/>
    <property type="project" value="UniProtKB-SubCell"/>
</dbReference>
<dbReference type="GO" id="GO:0020002">
    <property type="term" value="C:host cell plasma membrane"/>
    <property type="evidence" value="ECO:0007669"/>
    <property type="project" value="UniProtKB-SubCell"/>
</dbReference>
<dbReference type="GO" id="GO:0016020">
    <property type="term" value="C:membrane"/>
    <property type="evidence" value="ECO:0007669"/>
    <property type="project" value="UniProtKB-KW"/>
</dbReference>
<dbReference type="GO" id="GO:0019031">
    <property type="term" value="C:viral envelope"/>
    <property type="evidence" value="ECO:0007669"/>
    <property type="project" value="UniProtKB-KW"/>
</dbReference>
<dbReference type="GO" id="GO:0055036">
    <property type="term" value="C:virion membrane"/>
    <property type="evidence" value="ECO:0007669"/>
    <property type="project" value="UniProtKB-SubCell"/>
</dbReference>
<dbReference type="GO" id="GO:0019064">
    <property type="term" value="P:fusion of virus membrane with host plasma membrane"/>
    <property type="evidence" value="ECO:0007669"/>
    <property type="project" value="UniProtKB-KW"/>
</dbReference>
<dbReference type="GO" id="GO:0046718">
    <property type="term" value="P:symbiont entry into host cell"/>
    <property type="evidence" value="ECO:0007669"/>
    <property type="project" value="UniProtKB-KW"/>
</dbReference>
<dbReference type="Gene3D" id="3.30.390.170">
    <property type="match status" value="1"/>
</dbReference>
<dbReference type="HAMAP" id="MF_04034">
    <property type="entry name" value="HSV_GL_alphagamma"/>
    <property type="match status" value="1"/>
</dbReference>
<dbReference type="InterPro" id="IPR007923">
    <property type="entry name" value="Herpes_gL_N"/>
</dbReference>
<dbReference type="InterPro" id="IPR038311">
    <property type="entry name" value="Herpes_gL_N_sf"/>
</dbReference>
<dbReference type="InterPro" id="IPR034708">
    <property type="entry name" value="HSV_GL_alphagamma"/>
</dbReference>
<dbReference type="Pfam" id="PF05259">
    <property type="entry name" value="Herpes_UL1"/>
    <property type="match status" value="1"/>
</dbReference>
<dbReference type="PROSITE" id="PS52024">
    <property type="entry name" value="GL_AHV"/>
    <property type="match status" value="1"/>
</dbReference>